<name>PANB_VEREI</name>
<organism>
    <name type="scientific">Verminephrobacter eiseniae (strain EF01-2)</name>
    <dbReference type="NCBI Taxonomy" id="391735"/>
    <lineage>
        <taxon>Bacteria</taxon>
        <taxon>Pseudomonadati</taxon>
        <taxon>Pseudomonadota</taxon>
        <taxon>Betaproteobacteria</taxon>
        <taxon>Burkholderiales</taxon>
        <taxon>Comamonadaceae</taxon>
        <taxon>Verminephrobacter</taxon>
    </lineage>
</organism>
<sequence length="300" mass="30947">MPASAAPCAAPYGTPSPAAPEGAHTAAAGRGAPVSLPRLAQLRAAGEKITMLTAYDATFAALADAAGVECILVGDSLGMVCQGLPSTVGVQLDTMAYHSACVARGLHRVQGSAWLVADLPYGSYAESREQALRSACVLMQAGAQMVKLEGGGWTAPTVEFLVQRGVPVCAHLGLTPQSVHALGGYRVQGKTDAGARTLRQQARELQDAGAALLVLEMVPAALARDITDALPHCHTIGIGAGNGTAGQVLVLHDMLGMNLGKMPRFVHNFMQDAGSVHGAIAAYVQAVKQGRFPDDALHAW</sequence>
<reference key="1">
    <citation type="submission" date="2006-12" db="EMBL/GenBank/DDBJ databases">
        <title>Complete sequence of chromosome 1 of Verminephrobacter eiseniae EF01-2.</title>
        <authorList>
            <person name="Copeland A."/>
            <person name="Lucas S."/>
            <person name="Lapidus A."/>
            <person name="Barry K."/>
            <person name="Detter J.C."/>
            <person name="Glavina del Rio T."/>
            <person name="Dalin E."/>
            <person name="Tice H."/>
            <person name="Pitluck S."/>
            <person name="Chertkov O."/>
            <person name="Brettin T."/>
            <person name="Bruce D."/>
            <person name="Han C."/>
            <person name="Tapia R."/>
            <person name="Gilna P."/>
            <person name="Schmutz J."/>
            <person name="Larimer F."/>
            <person name="Land M."/>
            <person name="Hauser L."/>
            <person name="Kyrpides N."/>
            <person name="Kim E."/>
            <person name="Stahl D."/>
            <person name="Richardson P."/>
        </authorList>
    </citation>
    <scope>NUCLEOTIDE SEQUENCE [LARGE SCALE GENOMIC DNA]</scope>
    <source>
        <strain>EF01-2</strain>
    </source>
</reference>
<dbReference type="EC" id="2.1.2.11" evidence="1"/>
<dbReference type="EMBL" id="CP000542">
    <property type="protein sequence ID" value="ABM55821.1"/>
    <property type="status" value="ALT_INIT"/>
    <property type="molecule type" value="Genomic_DNA"/>
</dbReference>
<dbReference type="SMR" id="A1WDW4"/>
<dbReference type="STRING" id="391735.Veis_0028"/>
<dbReference type="KEGG" id="vei:Veis_0028"/>
<dbReference type="eggNOG" id="COG0413">
    <property type="taxonomic scope" value="Bacteria"/>
</dbReference>
<dbReference type="HOGENOM" id="CLU_036645_1_0_4"/>
<dbReference type="OrthoDB" id="9781789at2"/>
<dbReference type="UniPathway" id="UPA00028">
    <property type="reaction ID" value="UER00003"/>
</dbReference>
<dbReference type="Proteomes" id="UP000000374">
    <property type="component" value="Chromosome"/>
</dbReference>
<dbReference type="GO" id="GO:0005737">
    <property type="term" value="C:cytoplasm"/>
    <property type="evidence" value="ECO:0007669"/>
    <property type="project" value="UniProtKB-SubCell"/>
</dbReference>
<dbReference type="GO" id="GO:0003864">
    <property type="term" value="F:3-methyl-2-oxobutanoate hydroxymethyltransferase activity"/>
    <property type="evidence" value="ECO:0007669"/>
    <property type="project" value="UniProtKB-UniRule"/>
</dbReference>
<dbReference type="GO" id="GO:0000287">
    <property type="term" value="F:magnesium ion binding"/>
    <property type="evidence" value="ECO:0007669"/>
    <property type="project" value="TreeGrafter"/>
</dbReference>
<dbReference type="GO" id="GO:0015940">
    <property type="term" value="P:pantothenate biosynthetic process"/>
    <property type="evidence" value="ECO:0007669"/>
    <property type="project" value="UniProtKB-UniRule"/>
</dbReference>
<dbReference type="CDD" id="cd06557">
    <property type="entry name" value="KPHMT-like"/>
    <property type="match status" value="1"/>
</dbReference>
<dbReference type="FunFam" id="3.20.20.60:FF:000003">
    <property type="entry name" value="3-methyl-2-oxobutanoate hydroxymethyltransferase"/>
    <property type="match status" value="1"/>
</dbReference>
<dbReference type="Gene3D" id="3.20.20.60">
    <property type="entry name" value="Phosphoenolpyruvate-binding domains"/>
    <property type="match status" value="1"/>
</dbReference>
<dbReference type="HAMAP" id="MF_00156">
    <property type="entry name" value="PanB"/>
    <property type="match status" value="1"/>
</dbReference>
<dbReference type="InterPro" id="IPR003700">
    <property type="entry name" value="Pantoate_hydroxy_MeTrfase"/>
</dbReference>
<dbReference type="InterPro" id="IPR015813">
    <property type="entry name" value="Pyrv/PenolPyrv_kinase-like_dom"/>
</dbReference>
<dbReference type="InterPro" id="IPR040442">
    <property type="entry name" value="Pyrv_kinase-like_dom_sf"/>
</dbReference>
<dbReference type="NCBIfam" id="TIGR00222">
    <property type="entry name" value="panB"/>
    <property type="match status" value="1"/>
</dbReference>
<dbReference type="NCBIfam" id="NF001452">
    <property type="entry name" value="PRK00311.1"/>
    <property type="match status" value="1"/>
</dbReference>
<dbReference type="PANTHER" id="PTHR20881">
    <property type="entry name" value="3-METHYL-2-OXOBUTANOATE HYDROXYMETHYLTRANSFERASE"/>
    <property type="match status" value="1"/>
</dbReference>
<dbReference type="PANTHER" id="PTHR20881:SF0">
    <property type="entry name" value="3-METHYL-2-OXOBUTANOATE HYDROXYMETHYLTRANSFERASE"/>
    <property type="match status" value="1"/>
</dbReference>
<dbReference type="Pfam" id="PF02548">
    <property type="entry name" value="Pantoate_transf"/>
    <property type="match status" value="1"/>
</dbReference>
<dbReference type="PIRSF" id="PIRSF000388">
    <property type="entry name" value="Pantoate_hydroxy_MeTrfase"/>
    <property type="match status" value="1"/>
</dbReference>
<dbReference type="SUPFAM" id="SSF51621">
    <property type="entry name" value="Phosphoenolpyruvate/pyruvate domain"/>
    <property type="match status" value="1"/>
</dbReference>
<proteinExistence type="inferred from homology"/>
<feature type="chain" id="PRO_0000297406" description="3-methyl-2-oxobutanoate hydroxymethyltransferase">
    <location>
        <begin position="1"/>
        <end position="300"/>
    </location>
</feature>
<feature type="active site" description="Proton acceptor" evidence="1">
    <location>
        <position position="216"/>
    </location>
</feature>
<feature type="binding site" evidence="1">
    <location>
        <begin position="75"/>
        <end position="76"/>
    </location>
    <ligand>
        <name>3-methyl-2-oxobutanoate</name>
        <dbReference type="ChEBI" id="CHEBI:11851"/>
    </ligand>
</feature>
<feature type="binding site" evidence="1">
    <location>
        <position position="75"/>
    </location>
    <ligand>
        <name>Mg(2+)</name>
        <dbReference type="ChEBI" id="CHEBI:18420"/>
    </ligand>
</feature>
<feature type="binding site" evidence="1">
    <location>
        <position position="118"/>
    </location>
    <ligand>
        <name>3-methyl-2-oxobutanoate</name>
        <dbReference type="ChEBI" id="CHEBI:11851"/>
    </ligand>
</feature>
<feature type="binding site" evidence="1">
    <location>
        <position position="118"/>
    </location>
    <ligand>
        <name>Mg(2+)</name>
        <dbReference type="ChEBI" id="CHEBI:18420"/>
    </ligand>
</feature>
<feature type="binding site" evidence="1">
    <location>
        <position position="147"/>
    </location>
    <ligand>
        <name>3-methyl-2-oxobutanoate</name>
        <dbReference type="ChEBI" id="CHEBI:11851"/>
    </ligand>
</feature>
<feature type="binding site" evidence="1">
    <location>
        <position position="149"/>
    </location>
    <ligand>
        <name>Mg(2+)</name>
        <dbReference type="ChEBI" id="CHEBI:18420"/>
    </ligand>
</feature>
<keyword id="KW-0963">Cytoplasm</keyword>
<keyword id="KW-0460">Magnesium</keyword>
<keyword id="KW-0479">Metal-binding</keyword>
<keyword id="KW-0566">Pantothenate biosynthesis</keyword>
<keyword id="KW-1185">Reference proteome</keyword>
<keyword id="KW-0808">Transferase</keyword>
<evidence type="ECO:0000255" key="1">
    <source>
        <dbReference type="HAMAP-Rule" id="MF_00156"/>
    </source>
</evidence>
<evidence type="ECO:0000305" key="2"/>
<protein>
    <recommendedName>
        <fullName evidence="1">3-methyl-2-oxobutanoate hydroxymethyltransferase</fullName>
        <ecNumber evidence="1">2.1.2.11</ecNumber>
    </recommendedName>
    <alternativeName>
        <fullName evidence="1">Ketopantoate hydroxymethyltransferase</fullName>
        <shortName evidence="1">KPHMT</shortName>
    </alternativeName>
</protein>
<gene>
    <name evidence="1" type="primary">panB</name>
    <name type="ordered locus">Veis_0028</name>
</gene>
<comment type="function">
    <text evidence="1">Catalyzes the reversible reaction in which hydroxymethyl group from 5,10-methylenetetrahydrofolate is transferred onto alpha-ketoisovalerate to form ketopantoate.</text>
</comment>
<comment type="catalytic activity">
    <reaction evidence="1">
        <text>3-methyl-2-oxobutanoate + (6R)-5,10-methylene-5,6,7,8-tetrahydrofolate + H2O = 2-dehydropantoate + (6S)-5,6,7,8-tetrahydrofolate</text>
        <dbReference type="Rhea" id="RHEA:11824"/>
        <dbReference type="ChEBI" id="CHEBI:11561"/>
        <dbReference type="ChEBI" id="CHEBI:11851"/>
        <dbReference type="ChEBI" id="CHEBI:15377"/>
        <dbReference type="ChEBI" id="CHEBI:15636"/>
        <dbReference type="ChEBI" id="CHEBI:57453"/>
        <dbReference type="EC" id="2.1.2.11"/>
    </reaction>
</comment>
<comment type="cofactor">
    <cofactor evidence="1">
        <name>Mg(2+)</name>
        <dbReference type="ChEBI" id="CHEBI:18420"/>
    </cofactor>
    <text evidence="1">Binds 1 Mg(2+) ion per subunit.</text>
</comment>
<comment type="pathway">
    <text evidence="1">Cofactor biosynthesis; (R)-pantothenate biosynthesis; (R)-pantoate from 3-methyl-2-oxobutanoate: step 1/2.</text>
</comment>
<comment type="subunit">
    <text evidence="1">Homodecamer; pentamer of dimers.</text>
</comment>
<comment type="subcellular location">
    <subcellularLocation>
        <location evidence="1">Cytoplasm</location>
    </subcellularLocation>
</comment>
<comment type="similarity">
    <text evidence="1">Belongs to the PanB family.</text>
</comment>
<comment type="sequence caution" evidence="2">
    <conflict type="erroneous initiation">
        <sequence resource="EMBL-CDS" id="ABM55821"/>
    </conflict>
</comment>
<accession>A1WDW4</accession>